<organism>
    <name type="scientific">Turnip mosaic virus (strain Quebec)</name>
    <name type="common">TuMV</name>
    <dbReference type="NCBI Taxonomy" id="36396"/>
    <lineage>
        <taxon>Viruses</taxon>
        <taxon>Riboviria</taxon>
        <taxon>Orthornavirae</taxon>
        <taxon>Pisuviricota</taxon>
        <taxon>Stelpaviricetes</taxon>
        <taxon>Patatavirales</taxon>
        <taxon>Potyviridae</taxon>
        <taxon>Potyvirus</taxon>
        <taxon>Potyvirus rapae</taxon>
        <taxon>Turnip mosaic virus (strain Japanese)</taxon>
    </lineage>
</organism>
<sequence length="1052" mass="117956">MAAVTFASAITNAITNKTTSTGMVQFGSFPPMPLRSTTVTTVATPVGQPKLYTVRFGSLDPVIVKGGAGSLAKATRQQPSVEIDVSLSEAAALEVAKPKSSAVLRMHEEANKERALFLDWEASLKRRSYGIAENEKVVMTTRGVSKIVPRSSRAMKQKRARERRRAQQPIILKWEPKLSGFSIGGGFSASAIEAEEVRTKWPLHKTPSMKKRMVHKTCKMSDQGVDMLIRSLVKIFKAKSANIEYIGKKPIKVDFIRKERTKFARIQVAHLLGKRAQRDLLAGMEENHFIDILSEYSGNGTTINPGVVCAGWSGIVVRNETLTQKRSRSPSKAFVIRGEHEDKLYDARIKITKTMSLKIVHFSARGANFWKGFDRCFLAYRSDNREHTCYSGLDVTECGEVAALMCLAMFPCGKITCPDCVIDSELSQGQASGPSMKHRLTQLRDVIKSSYPRFKHAVQILDRYEQSLSSANENYQDFAEIQSISDGVEKAAFPHVNKLNAILIKGATATGEEFSQATKHLLEIARYLKNRTENIEKGSLKSFRNKVSQKAHINPTLMCDNQLDKNGNFIWGERGYHAKRFFSNYFEIIDPKKGYTQYETRVVPNGSRKLAIGKLIVPTNFEVLREQMRGEPVEPYPVTVECVSKSQGDFVHACCCVTTESGDPVLSEIKMPTKHHLVIGNSGDPKYIDLPEIEENKMYIAKEGYCYINIFLAMLVNVKESQAKEFTKVVRDKLVSELGKWPTLLDVATACYFLKVFYPDVANAELPRMLVDHKTKIIHVVDSYGSLSTGYHVLKTNTVEQLIKFTRCNLESSLKHYRVGGTEWENAHGADNIDNPQWCIKRLVKGVYRPKQLKEDMLANPFLPLYALLSPGVILAFYNSGSLEHLMNHYISADSNVAVLLVVLKSLAKKVSTSQSVLAQLQIIERSLPELIEAKANINGPDDAATRACNRFMGMLLHMAEPNYELANGGYTFLRDHSISILEKKLSADLGRGMERVKLVGALCYKILPVKASNLYTERFANAKRSRFRRQIQRVGHILLRVEQTASKRSER</sequence>
<keyword id="KW-1031">Host cell junction</keyword>
<keyword id="KW-0945">Host-virus interaction</keyword>
<keyword id="KW-0378">Hydrolase</keyword>
<keyword id="KW-1090">Inhibition of host innate immune response by virus</keyword>
<keyword id="KW-0645">Protease</keyword>
<keyword id="KW-0688">Ribosomal frameshifting</keyword>
<keyword id="KW-0720">Serine protease</keyword>
<keyword id="KW-0941">Suppressor of RNA silencing</keyword>
<keyword id="KW-0813">Transport</keyword>
<keyword id="KW-0899">Viral immunoevasion</keyword>
<keyword id="KW-0916">Viral movement protein</keyword>
<accession>P0CK12</accession>
<proteinExistence type="inferred from homology"/>
<dbReference type="EC" id="3.4.21.-"/>
<dbReference type="EC" id="3.4.22.45" evidence="5"/>
<dbReference type="EMBL" id="D10927">
    <property type="status" value="NOT_ANNOTATED_CDS"/>
    <property type="molecule type" value="Genomic_RNA"/>
</dbReference>
<dbReference type="SMR" id="P0CK12"/>
<dbReference type="Proteomes" id="UP000008263">
    <property type="component" value="Genome"/>
</dbReference>
<dbReference type="GO" id="GO:0044219">
    <property type="term" value="C:host cell plasmodesma"/>
    <property type="evidence" value="ECO:0007669"/>
    <property type="project" value="UniProtKB-SubCell"/>
</dbReference>
<dbReference type="GO" id="GO:0004197">
    <property type="term" value="F:cysteine-type endopeptidase activity"/>
    <property type="evidence" value="ECO:0007669"/>
    <property type="project" value="InterPro"/>
</dbReference>
<dbReference type="GO" id="GO:0008236">
    <property type="term" value="F:serine-type peptidase activity"/>
    <property type="evidence" value="ECO:0007669"/>
    <property type="project" value="UniProtKB-KW"/>
</dbReference>
<dbReference type="GO" id="GO:0006508">
    <property type="term" value="P:proteolysis"/>
    <property type="evidence" value="ECO:0007669"/>
    <property type="project" value="UniProtKB-KW"/>
</dbReference>
<dbReference type="GO" id="GO:0052170">
    <property type="term" value="P:symbiont-mediated suppression of host innate immune response"/>
    <property type="evidence" value="ECO:0007669"/>
    <property type="project" value="UniProtKB-KW"/>
</dbReference>
<dbReference type="GO" id="GO:0046740">
    <property type="term" value="P:transport of virus in host, cell to cell"/>
    <property type="evidence" value="ECO:0007669"/>
    <property type="project" value="UniProtKB-KW"/>
</dbReference>
<dbReference type="GO" id="GO:0075523">
    <property type="term" value="P:viral translational frameshifting"/>
    <property type="evidence" value="ECO:0007669"/>
    <property type="project" value="UniProtKB-KW"/>
</dbReference>
<dbReference type="Gene3D" id="3.90.70.150">
    <property type="entry name" value="Helper component proteinase"/>
    <property type="match status" value="1"/>
</dbReference>
<dbReference type="InterPro" id="IPR001456">
    <property type="entry name" value="HC-pro"/>
</dbReference>
<dbReference type="InterPro" id="IPR031159">
    <property type="entry name" value="HC_PRO_CPD_dom"/>
</dbReference>
<dbReference type="InterPro" id="IPR042308">
    <property type="entry name" value="HC_PRO_CPD_sf"/>
</dbReference>
<dbReference type="InterPro" id="IPR002540">
    <property type="entry name" value="Pept_S30_P1_potyvir"/>
</dbReference>
<dbReference type="InterPro" id="IPR039560">
    <property type="entry name" value="Potyvirid-P3"/>
</dbReference>
<dbReference type="Pfam" id="PF00851">
    <property type="entry name" value="Peptidase_C6"/>
    <property type="match status" value="1"/>
</dbReference>
<dbReference type="Pfam" id="PF01577">
    <property type="entry name" value="Peptidase_S30"/>
    <property type="match status" value="1"/>
</dbReference>
<dbReference type="Pfam" id="PF13608">
    <property type="entry name" value="Potyvirid-P3"/>
    <property type="match status" value="1"/>
</dbReference>
<dbReference type="PROSITE" id="PS51744">
    <property type="entry name" value="HC_PRO_CPD"/>
    <property type="match status" value="1"/>
</dbReference>
<dbReference type="PROSITE" id="PS51871">
    <property type="entry name" value="PV_P1_PRO"/>
    <property type="match status" value="1"/>
</dbReference>
<protein>
    <recommendedName>
        <fullName>P3N-PIPO polyprotein</fullName>
    </recommendedName>
    <component>
        <recommendedName>
            <fullName>P1 protease</fullName>
            <ecNumber>3.4.21.-</ecNumber>
        </recommendedName>
        <alternativeName>
            <fullName>N-terminal protein</fullName>
        </alternativeName>
        <alternativeName>
            <fullName>P1 proteinase</fullName>
        </alternativeName>
    </component>
    <component>
        <recommendedName>
            <fullName evidence="5">Helper component proteinase</fullName>
            <shortName evidence="5">HC-pro</shortName>
            <ecNumber evidence="5">3.4.22.45</ecNumber>
        </recommendedName>
    </component>
    <component>
        <recommendedName>
            <fullName>Movement protein P3N-PIPO</fullName>
        </recommendedName>
        <alternativeName>
            <fullName>Pretty interesting potyviridae ORF</fullName>
            <shortName>PIPO</shortName>
        </alternativeName>
    </component>
</protein>
<name>MVP_TUMVQ</name>
<evidence type="ECO:0000250" key="1"/>
<evidence type="ECO:0000250" key="2">
    <source>
        <dbReference type="UniProtKB" id="P04517"/>
    </source>
</evidence>
<evidence type="ECO:0000250" key="3">
    <source>
        <dbReference type="UniProtKB" id="P0CK11"/>
    </source>
</evidence>
<evidence type="ECO:0000255" key="4"/>
<evidence type="ECO:0000255" key="5">
    <source>
        <dbReference type="PROSITE-ProRule" id="PRU01080"/>
    </source>
</evidence>
<evidence type="ECO:0000255" key="6">
    <source>
        <dbReference type="PROSITE-ProRule" id="PRU01219"/>
    </source>
</evidence>
<evidence type="ECO:0000305" key="7"/>
<comment type="function">
    <molecule>Helper component proteinase</molecule>
    <text evidence="2">Required for aphid transmission and also has proteolytic activity. Only cleaves a Gly-Gly dipeptide at its own C-terminus. Interacts with virions and aphid stylets. Acts as a suppressor of RNA-mediated gene silencing, also known as post-transcriptional gene silencing (PTGS), a mechanism of plant viral defense that limits the accumulation of viral RNAs. May have RNA-binding activity.</text>
</comment>
<comment type="function">
    <molecule>Movement protein P3N-PIPO</molecule>
    <text evidence="3">Allows efficient cell to cell propagation, by bypassing the host cell wall barrier. Transports viral genome to neighboring plant cells directly through plasmosdesmata, without any budding.</text>
</comment>
<comment type="catalytic activity">
    <molecule>Helper component proteinase</molecule>
    <reaction>
        <text>Hydrolyzes a Gly-|-Gly bond at its own C-terminus, commonly in the sequence -Tyr-Xaa-Val-Gly-|-Gly, in the processing of the potyviral polyprotein.</text>
        <dbReference type="EC" id="3.4.22.45"/>
    </reaction>
</comment>
<comment type="subunit">
    <molecule>Movement protein P3N-PIPO</molecule>
    <text evidence="3">Interacts (via PIPO domain) with host PCaP1 protein; this interaction may help to anchor the movement complex to the plasma membrane from which the complex could move to the plasmodesmata.</text>
</comment>
<comment type="subcellular location">
    <molecule>Movement protein P3N-PIPO</molecule>
    <subcellularLocation>
        <location evidence="3">Host cell junction</location>
        <location evidence="3">Host plasmodesma</location>
    </subcellularLocation>
</comment>
<comment type="alternative products">
    <event type="ribosomal frameshifting"/>
    <isoform>
        <id>P0CK12-1</id>
        <name>P3N-PIPO polyprotein</name>
        <sequence type="displayed"/>
    </isoform>
    <isoform>
        <id>Q02597-1</id>
        <name>Genome polyprotein</name>
        <sequence type="external"/>
    </isoform>
</comment>
<comment type="domain">
    <text evidence="1">The N-terminus of helper component proteinase is involved in interaction with stylets. The central part is involved in interaction with virions and the C-terminus is involved in cell-to cell movement of the virus (By similarity).</text>
</comment>
<comment type="PTM">
    <text evidence="1">Potyviral RNA is expressed as two polyproteins which undergo post-translational proteolytic processing. Genome polyprotein is processed by NIa-pro, P1 and HC-pro proteinases resulting in the production of at least ten individual proteins. P3N-PIPO is cleaved by P1 and HC-pro proteinases resulting in the production of three individual proteins. The P1 proteinase and the HC-pro cleave only their respective C-termini autocatalytically (By similarity).</text>
</comment>
<comment type="miscellaneous">
    <molecule>Isoform P3N-PIPO polyprotein</molecule>
    <text>Produced by -1 ribosomal frameshifting in P3 ORF.</text>
</comment>
<comment type="similarity">
    <text evidence="7">Belongs to the potyviridae P3N-PIPO polyprotein family.</text>
</comment>
<organismHost>
    <name type="scientific">Brassica</name>
    <dbReference type="NCBI Taxonomy" id="3705"/>
</organismHost>
<feature type="chain" id="PRO_0000420098" description="P3N-PIPO polyprotein">
    <location>
        <begin position="1"/>
        <end position="1052"/>
    </location>
</feature>
<feature type="chain" id="PRO_0000420099" description="P1 protease" evidence="4">
    <location>
        <begin position="1"/>
        <end position="362"/>
    </location>
</feature>
<feature type="chain" id="PRO_0000420100" description="Helper component proteinase" evidence="4">
    <location>
        <begin position="363"/>
        <end position="820"/>
    </location>
</feature>
<feature type="chain" id="PRO_0000408555" description="Movement protein P3N-PIPO">
    <location>
        <begin position="821"/>
        <end position="1052"/>
    </location>
</feature>
<feature type="domain" description="Peptidase S30" evidence="6">
    <location>
        <begin position="219"/>
        <end position="362"/>
    </location>
</feature>
<feature type="domain" description="Peptidase C6" evidence="5">
    <location>
        <begin position="698"/>
        <end position="820"/>
    </location>
</feature>
<feature type="short sequence motif" description="Involved in interaction with stylet and aphid transmission" evidence="1">
    <location>
        <begin position="414"/>
        <end position="417"/>
    </location>
</feature>
<feature type="short sequence motif" description="Involved in virions binding and aphid transmission" evidence="1">
    <location>
        <begin position="672"/>
        <end position="674"/>
    </location>
</feature>
<feature type="active site" description="For P1 proteinase activity" evidence="6">
    <location>
        <position position="270"/>
    </location>
</feature>
<feature type="active site" description="For P1 proteinase activity" evidence="6">
    <location>
        <position position="279"/>
    </location>
</feature>
<feature type="active site" description="For P1 proteinase activity" evidence="6">
    <location>
        <position position="313"/>
    </location>
</feature>
<feature type="active site" description="For helper component proteinase activity" evidence="5">
    <location>
        <position position="706"/>
    </location>
</feature>
<feature type="active site" description="For helper component proteinase activity" evidence="5">
    <location>
        <position position="779"/>
    </location>
</feature>
<feature type="site" description="Cleavage; by P1 proteinase" evidence="6">
    <location>
        <begin position="362"/>
        <end position="363"/>
    </location>
</feature>
<feature type="site" description="Cleavage; by autolysis" evidence="5">
    <location>
        <begin position="820"/>
        <end position="821"/>
    </location>
</feature>
<feature type="unsure residue">
    <location>
        <begin position="982"/>
        <end position="988"/>
    </location>
</feature>
<reference key="1">
    <citation type="journal article" date="1992" name="J. Gen. Virol.">
        <title>The complete nucleotide sequence of turnip mosaic potyvirus RNA.</title>
        <authorList>
            <person name="Nicolas O."/>
            <person name="Laliberte J.F."/>
        </authorList>
    </citation>
    <scope>NUCLEOTIDE SEQUENCE [GENOMIC RNA]</scope>
</reference>